<feature type="chain" id="PRO_1000068108" description="Large ribosomal subunit protein uL23">
    <location>
        <begin position="1"/>
        <end position="86"/>
    </location>
</feature>
<accession>A6VHD4</accession>
<comment type="function">
    <text evidence="1">Binds to 23S rRNA. One of the proteins that surrounds the polypeptide exit tunnel on the outside of the ribosome.</text>
</comment>
<comment type="subunit">
    <text evidence="1">Part of the 50S ribosomal subunit. Contacts protein L29.</text>
</comment>
<comment type="similarity">
    <text evidence="1">Belongs to the universal ribosomal protein uL23 family.</text>
</comment>
<protein>
    <recommendedName>
        <fullName evidence="1">Large ribosomal subunit protein uL23</fullName>
    </recommendedName>
    <alternativeName>
        <fullName evidence="2">50S ribosomal protein L23</fullName>
    </alternativeName>
</protein>
<sequence length="86" mass="9614">MDAFDVIKTPIVSEKTMKLIEEENRLVFYVERKATKADIRAAIKELFDAEVADINTSITPKGKKKAYITLKSEYNAGEVAASLGIY</sequence>
<proteinExistence type="inferred from homology"/>
<dbReference type="EMBL" id="CP000745">
    <property type="protein sequence ID" value="ABR65860.1"/>
    <property type="molecule type" value="Genomic_DNA"/>
</dbReference>
<dbReference type="SMR" id="A6VHD4"/>
<dbReference type="STRING" id="426368.MmarC7_0793"/>
<dbReference type="KEGG" id="mmz:MmarC7_0793"/>
<dbReference type="eggNOG" id="arCOG04072">
    <property type="taxonomic scope" value="Archaea"/>
</dbReference>
<dbReference type="HOGENOM" id="CLU_037562_4_2_2"/>
<dbReference type="OrthoDB" id="7751at2157"/>
<dbReference type="GO" id="GO:1990904">
    <property type="term" value="C:ribonucleoprotein complex"/>
    <property type="evidence" value="ECO:0007669"/>
    <property type="project" value="UniProtKB-KW"/>
</dbReference>
<dbReference type="GO" id="GO:0005840">
    <property type="term" value="C:ribosome"/>
    <property type="evidence" value="ECO:0007669"/>
    <property type="project" value="UniProtKB-KW"/>
</dbReference>
<dbReference type="GO" id="GO:0019843">
    <property type="term" value="F:rRNA binding"/>
    <property type="evidence" value="ECO:0007669"/>
    <property type="project" value="UniProtKB-UniRule"/>
</dbReference>
<dbReference type="GO" id="GO:0003735">
    <property type="term" value="F:structural constituent of ribosome"/>
    <property type="evidence" value="ECO:0007669"/>
    <property type="project" value="InterPro"/>
</dbReference>
<dbReference type="GO" id="GO:0006412">
    <property type="term" value="P:translation"/>
    <property type="evidence" value="ECO:0007669"/>
    <property type="project" value="UniProtKB-UniRule"/>
</dbReference>
<dbReference type="FunFam" id="3.30.70.330:FF:000532">
    <property type="entry name" value="50S ribosomal protein L23"/>
    <property type="match status" value="1"/>
</dbReference>
<dbReference type="Gene3D" id="3.30.70.330">
    <property type="match status" value="1"/>
</dbReference>
<dbReference type="HAMAP" id="MF_01369_A">
    <property type="entry name" value="Ribosomal_uL23_A"/>
    <property type="match status" value="1"/>
</dbReference>
<dbReference type="HAMAP" id="MF_01369_B">
    <property type="entry name" value="Ribosomal_uL23_B"/>
    <property type="match status" value="1"/>
</dbReference>
<dbReference type="InterPro" id="IPR012677">
    <property type="entry name" value="Nucleotide-bd_a/b_plait_sf"/>
</dbReference>
<dbReference type="InterPro" id="IPR019985">
    <property type="entry name" value="Ribosomal_uL23"/>
</dbReference>
<dbReference type="InterPro" id="IPR013025">
    <property type="entry name" value="Ribosomal_uL23-like"/>
</dbReference>
<dbReference type="InterPro" id="IPR012678">
    <property type="entry name" value="Ribosomal_uL23/eL15/eS24_sf"/>
</dbReference>
<dbReference type="InterPro" id="IPR001014">
    <property type="entry name" value="Ribosomal_uL23_CS"/>
</dbReference>
<dbReference type="NCBIfam" id="NF011118">
    <property type="entry name" value="PRK14548.1"/>
    <property type="match status" value="1"/>
</dbReference>
<dbReference type="NCBIfam" id="TIGR03636">
    <property type="entry name" value="uL23_arch"/>
    <property type="match status" value="1"/>
</dbReference>
<dbReference type="PANTHER" id="PTHR11620">
    <property type="entry name" value="60S RIBOSOMAL PROTEIN L23A"/>
    <property type="match status" value="1"/>
</dbReference>
<dbReference type="Pfam" id="PF00276">
    <property type="entry name" value="Ribosomal_L23"/>
    <property type="match status" value="1"/>
</dbReference>
<dbReference type="SUPFAM" id="SSF54189">
    <property type="entry name" value="Ribosomal proteins S24e, L23 and L15e"/>
    <property type="match status" value="1"/>
</dbReference>
<dbReference type="PROSITE" id="PS00050">
    <property type="entry name" value="RIBOSOMAL_L23"/>
    <property type="match status" value="1"/>
</dbReference>
<organism>
    <name type="scientific">Methanococcus maripaludis (strain C7 / ATCC BAA-1331)</name>
    <dbReference type="NCBI Taxonomy" id="426368"/>
    <lineage>
        <taxon>Archaea</taxon>
        <taxon>Methanobacteriati</taxon>
        <taxon>Methanobacteriota</taxon>
        <taxon>Methanomada group</taxon>
        <taxon>Methanococci</taxon>
        <taxon>Methanococcales</taxon>
        <taxon>Methanococcaceae</taxon>
        <taxon>Methanococcus</taxon>
    </lineage>
</organism>
<name>RL23_METM7</name>
<reference key="1">
    <citation type="submission" date="2007-06" db="EMBL/GenBank/DDBJ databases">
        <title>Complete sequence of Methanococcus maripaludis C7.</title>
        <authorList>
            <consortium name="US DOE Joint Genome Institute"/>
            <person name="Copeland A."/>
            <person name="Lucas S."/>
            <person name="Lapidus A."/>
            <person name="Barry K."/>
            <person name="Glavina del Rio T."/>
            <person name="Dalin E."/>
            <person name="Tice H."/>
            <person name="Pitluck S."/>
            <person name="Clum A."/>
            <person name="Schmutz J."/>
            <person name="Larimer F."/>
            <person name="Land M."/>
            <person name="Hauser L."/>
            <person name="Kyrpides N."/>
            <person name="Anderson I."/>
            <person name="Sieprawska-Lupa M."/>
            <person name="Whitman W.B."/>
            <person name="Richardson P."/>
        </authorList>
    </citation>
    <scope>NUCLEOTIDE SEQUENCE [LARGE SCALE GENOMIC DNA]</scope>
    <source>
        <strain>C7 / ATCC BAA-1331</strain>
    </source>
</reference>
<keyword id="KW-0687">Ribonucleoprotein</keyword>
<keyword id="KW-0689">Ribosomal protein</keyword>
<keyword id="KW-0694">RNA-binding</keyword>
<keyword id="KW-0699">rRNA-binding</keyword>
<evidence type="ECO:0000255" key="1">
    <source>
        <dbReference type="HAMAP-Rule" id="MF_01369"/>
    </source>
</evidence>
<evidence type="ECO:0000305" key="2"/>
<gene>
    <name evidence="1" type="primary">rpl23</name>
    <name type="ordered locus">MmarC7_0793</name>
</gene>